<evidence type="ECO:0000250" key="1">
    <source>
        <dbReference type="UniProtKB" id="P0C8E7"/>
    </source>
</evidence>
<evidence type="ECO:0000255" key="2"/>
<evidence type="ECO:0000255" key="3">
    <source>
        <dbReference type="PROSITE-ProRule" id="PRU00498"/>
    </source>
</evidence>
<evidence type="ECO:0000269" key="4">
    <source>
    </source>
</evidence>
<evidence type="ECO:0000303" key="5">
    <source>
    </source>
</evidence>
<evidence type="ECO:0000305" key="6"/>
<evidence type="ECO:0000312" key="7">
    <source>
        <dbReference type="EMBL" id="JAA60786.1"/>
    </source>
</evidence>
<name>EV467_RHIPC</name>
<sequence>MALKACITVIAVVYVVQVVRGAEKSLDSDSSGEDYELWTQGCPFLVAENRTGFGTTVSCQHNCNGAIEKVPEGEPCYTIGEDGLGRMKLNLPYNCSLGECSGGVCVPNGRSDVCFKRTWEENNKAMA</sequence>
<keyword id="KW-1015">Disulfide bond</keyword>
<keyword id="KW-0325">Glycoprotein</keyword>
<keyword id="KW-0964">Secreted</keyword>
<keyword id="KW-0732">Signal</keyword>
<organism>
    <name type="scientific">Rhipicephalus pulchellus</name>
    <name type="common">Yellow backed tick</name>
    <name type="synonym">Dermacentor pulchellus</name>
    <dbReference type="NCBI Taxonomy" id="72859"/>
    <lineage>
        <taxon>Eukaryota</taxon>
        <taxon>Metazoa</taxon>
        <taxon>Ecdysozoa</taxon>
        <taxon>Arthropoda</taxon>
        <taxon>Chelicerata</taxon>
        <taxon>Arachnida</taxon>
        <taxon>Acari</taxon>
        <taxon>Parasitiformes</taxon>
        <taxon>Ixodida</taxon>
        <taxon>Ixodoidea</taxon>
        <taxon>Ixodidae</taxon>
        <taxon>Rhipicephalinae</taxon>
        <taxon>Rhipicephalus</taxon>
        <taxon>Rhipicephalus</taxon>
    </lineage>
</organism>
<protein>
    <recommendedName>
        <fullName evidence="5">Evasin P467</fullName>
    </recommendedName>
</protein>
<dbReference type="EMBL" id="GACK01004248">
    <property type="protein sequence ID" value="JAA60786.1"/>
    <property type="molecule type" value="mRNA"/>
</dbReference>
<dbReference type="SMR" id="L7M8Z8"/>
<dbReference type="GO" id="GO:0005576">
    <property type="term" value="C:extracellular region"/>
    <property type="evidence" value="ECO:0007669"/>
    <property type="project" value="UniProtKB-SubCell"/>
</dbReference>
<dbReference type="GO" id="GO:0019957">
    <property type="term" value="F:C-C chemokine binding"/>
    <property type="evidence" value="ECO:0000314"/>
    <property type="project" value="UniProtKB"/>
</dbReference>
<dbReference type="Gene3D" id="2.30.130.100">
    <property type="match status" value="1"/>
</dbReference>
<dbReference type="InterPro" id="IPR045797">
    <property type="entry name" value="EVA_Class_A"/>
</dbReference>
<dbReference type="Pfam" id="PF19429">
    <property type="entry name" value="EVA_Class_A"/>
    <property type="match status" value="1"/>
</dbReference>
<feature type="signal peptide" evidence="2">
    <location>
        <begin position="1"/>
        <end position="21"/>
    </location>
</feature>
<feature type="chain" id="PRO_5003981916" description="Evasin P467" evidence="2">
    <location>
        <begin position="22"/>
        <end position="127"/>
    </location>
</feature>
<feature type="glycosylation site" description="N-linked (GlcNAc...) asparagine" evidence="3">
    <location>
        <position position="49"/>
    </location>
</feature>
<feature type="glycosylation site" description="N-linked (GlcNAc...) asparagine" evidence="3">
    <location>
        <position position="94"/>
    </location>
</feature>
<feature type="disulfide bond" evidence="1">
    <location>
        <begin position="42"/>
        <end position="63"/>
    </location>
</feature>
<feature type="disulfide bond" evidence="1">
    <location>
        <begin position="59"/>
        <end position="100"/>
    </location>
</feature>
<feature type="disulfide bond" evidence="1">
    <location>
        <begin position="76"/>
        <end position="105"/>
    </location>
</feature>
<feature type="disulfide bond" evidence="1">
    <location>
        <begin position="95"/>
        <end position="114"/>
    </location>
</feature>
<reference evidence="7" key="1">
    <citation type="journal article" date="2015" name="J. Proteomics">
        <title>Sexual differences in the sialomes of the zebra tick, Rhipicephalus pulchellus.</title>
        <authorList>
            <person name="Tan A.W."/>
            <person name="Francischetti I.M."/>
            <person name="Slovak M."/>
            <person name="Kini R.M."/>
            <person name="Ribeiro J.M."/>
        </authorList>
    </citation>
    <scope>NUCLEOTIDE SEQUENCE [LARGE SCALE MRNA]</scope>
    <source>
        <tissue evidence="7">Salivary gland</tissue>
    </source>
</reference>
<reference evidence="6" key="2">
    <citation type="journal article" date="2017" name="Sci. Rep.">
        <title>Yeast surface display identifies a family of evasins from ticks with novel polyvalent CC chemokine-binding activities.</title>
        <authorList>
            <person name="Singh K."/>
            <person name="Davies G."/>
            <person name="Alenazi Y."/>
            <person name="Eaton J.R.O."/>
            <person name="Kawamura A."/>
            <person name="Bhattacharya S."/>
        </authorList>
    </citation>
    <scope>FUNCTION</scope>
</reference>
<proteinExistence type="evidence at transcript level"/>
<accession>L7M8Z8</accession>
<comment type="function">
    <text evidence="4">Salivary chemokine-binding protein which binds to host chemokines CCL1, CCL2, CCL3 and CCL5.</text>
</comment>
<comment type="subcellular location">
    <subcellularLocation>
        <location evidence="6">Secreted</location>
    </subcellularLocation>
</comment>